<organism>
    <name type="scientific">Listeria innocua serovar 6a (strain ATCC BAA-680 / CLIP 11262)</name>
    <dbReference type="NCBI Taxonomy" id="272626"/>
    <lineage>
        <taxon>Bacteria</taxon>
        <taxon>Bacillati</taxon>
        <taxon>Bacillota</taxon>
        <taxon>Bacilli</taxon>
        <taxon>Bacillales</taxon>
        <taxon>Listeriaceae</taxon>
        <taxon>Listeria</taxon>
    </lineage>
</organism>
<comment type="function">
    <text evidence="1">Modulates transcription in response to changes in cellular NADH/NAD(+) redox state.</text>
</comment>
<comment type="subunit">
    <text evidence="1">Homodimer.</text>
</comment>
<comment type="subcellular location">
    <subcellularLocation>
        <location evidence="1">Cytoplasm</location>
    </subcellularLocation>
</comment>
<comment type="similarity">
    <text evidence="1">Belongs to the transcriptional regulatory Rex family.</text>
</comment>
<evidence type="ECO:0000255" key="1">
    <source>
        <dbReference type="HAMAP-Rule" id="MF_01131"/>
    </source>
</evidence>
<protein>
    <recommendedName>
        <fullName evidence="1">Redox-sensing transcriptional repressor Rex</fullName>
    </recommendedName>
</protein>
<dbReference type="EMBL" id="AL596171">
    <property type="protein sequence ID" value="CAC97407.1"/>
    <property type="molecule type" value="Genomic_DNA"/>
</dbReference>
<dbReference type="PIR" id="AG1704">
    <property type="entry name" value="AG1704"/>
</dbReference>
<dbReference type="RefSeq" id="WP_003722329.1">
    <property type="nucleotide sequence ID" value="NC_003212.1"/>
</dbReference>
<dbReference type="SMR" id="P60383"/>
<dbReference type="STRING" id="272626.gene:17566535"/>
<dbReference type="KEGG" id="lin:lin2178"/>
<dbReference type="eggNOG" id="COG2344">
    <property type="taxonomic scope" value="Bacteria"/>
</dbReference>
<dbReference type="HOGENOM" id="CLU_061534_1_1_9"/>
<dbReference type="OrthoDB" id="9784760at2"/>
<dbReference type="Proteomes" id="UP000002513">
    <property type="component" value="Chromosome"/>
</dbReference>
<dbReference type="GO" id="GO:0005737">
    <property type="term" value="C:cytoplasm"/>
    <property type="evidence" value="ECO:0007669"/>
    <property type="project" value="UniProtKB-SubCell"/>
</dbReference>
<dbReference type="GO" id="GO:0003677">
    <property type="term" value="F:DNA binding"/>
    <property type="evidence" value="ECO:0007669"/>
    <property type="project" value="UniProtKB-UniRule"/>
</dbReference>
<dbReference type="GO" id="GO:0003700">
    <property type="term" value="F:DNA-binding transcription factor activity"/>
    <property type="evidence" value="ECO:0007669"/>
    <property type="project" value="UniProtKB-UniRule"/>
</dbReference>
<dbReference type="GO" id="GO:0045892">
    <property type="term" value="P:negative regulation of DNA-templated transcription"/>
    <property type="evidence" value="ECO:0007669"/>
    <property type="project" value="InterPro"/>
</dbReference>
<dbReference type="GO" id="GO:0051775">
    <property type="term" value="P:response to redox state"/>
    <property type="evidence" value="ECO:0007669"/>
    <property type="project" value="InterPro"/>
</dbReference>
<dbReference type="Gene3D" id="3.40.50.720">
    <property type="entry name" value="NAD(P)-binding Rossmann-like Domain"/>
    <property type="match status" value="1"/>
</dbReference>
<dbReference type="Gene3D" id="1.10.10.10">
    <property type="entry name" value="Winged helix-like DNA-binding domain superfamily/Winged helix DNA-binding domain"/>
    <property type="match status" value="1"/>
</dbReference>
<dbReference type="HAMAP" id="MF_01131">
    <property type="entry name" value="Rex"/>
    <property type="match status" value="1"/>
</dbReference>
<dbReference type="InterPro" id="IPR003781">
    <property type="entry name" value="CoA-bd"/>
</dbReference>
<dbReference type="InterPro" id="IPR036291">
    <property type="entry name" value="NAD(P)-bd_dom_sf"/>
</dbReference>
<dbReference type="InterPro" id="IPR009718">
    <property type="entry name" value="Rex_DNA-bd_C_dom"/>
</dbReference>
<dbReference type="InterPro" id="IPR022876">
    <property type="entry name" value="Tscrpt_rep_Rex"/>
</dbReference>
<dbReference type="InterPro" id="IPR036388">
    <property type="entry name" value="WH-like_DNA-bd_sf"/>
</dbReference>
<dbReference type="InterPro" id="IPR036390">
    <property type="entry name" value="WH_DNA-bd_sf"/>
</dbReference>
<dbReference type="NCBIfam" id="NF003989">
    <property type="entry name" value="PRK05472.1-3"/>
    <property type="match status" value="1"/>
</dbReference>
<dbReference type="NCBIfam" id="NF003991">
    <property type="entry name" value="PRK05472.1-5"/>
    <property type="match status" value="1"/>
</dbReference>
<dbReference type="NCBIfam" id="NF003994">
    <property type="entry name" value="PRK05472.2-3"/>
    <property type="match status" value="1"/>
</dbReference>
<dbReference type="NCBIfam" id="NF003995">
    <property type="entry name" value="PRK05472.2-4"/>
    <property type="match status" value="1"/>
</dbReference>
<dbReference type="NCBIfam" id="NF003996">
    <property type="entry name" value="PRK05472.2-5"/>
    <property type="match status" value="1"/>
</dbReference>
<dbReference type="PANTHER" id="PTHR35786">
    <property type="entry name" value="REDOX-SENSING TRANSCRIPTIONAL REPRESSOR REX"/>
    <property type="match status" value="1"/>
</dbReference>
<dbReference type="PANTHER" id="PTHR35786:SF1">
    <property type="entry name" value="REDOX-SENSING TRANSCRIPTIONAL REPRESSOR REX 1"/>
    <property type="match status" value="1"/>
</dbReference>
<dbReference type="Pfam" id="PF02629">
    <property type="entry name" value="CoA_binding"/>
    <property type="match status" value="1"/>
</dbReference>
<dbReference type="Pfam" id="PF06971">
    <property type="entry name" value="Put_DNA-bind_N"/>
    <property type="match status" value="1"/>
</dbReference>
<dbReference type="SMART" id="SM00881">
    <property type="entry name" value="CoA_binding"/>
    <property type="match status" value="1"/>
</dbReference>
<dbReference type="SUPFAM" id="SSF51735">
    <property type="entry name" value="NAD(P)-binding Rossmann-fold domains"/>
    <property type="match status" value="1"/>
</dbReference>
<dbReference type="SUPFAM" id="SSF46785">
    <property type="entry name" value="Winged helix' DNA-binding domain"/>
    <property type="match status" value="1"/>
</dbReference>
<proteinExistence type="inferred from homology"/>
<reference key="1">
    <citation type="journal article" date="2001" name="Science">
        <title>Comparative genomics of Listeria species.</title>
        <authorList>
            <person name="Glaser P."/>
            <person name="Frangeul L."/>
            <person name="Buchrieser C."/>
            <person name="Rusniok C."/>
            <person name="Amend A."/>
            <person name="Baquero F."/>
            <person name="Berche P."/>
            <person name="Bloecker H."/>
            <person name="Brandt P."/>
            <person name="Chakraborty T."/>
            <person name="Charbit A."/>
            <person name="Chetouani F."/>
            <person name="Couve E."/>
            <person name="de Daruvar A."/>
            <person name="Dehoux P."/>
            <person name="Domann E."/>
            <person name="Dominguez-Bernal G."/>
            <person name="Duchaud E."/>
            <person name="Durant L."/>
            <person name="Dussurget O."/>
            <person name="Entian K.-D."/>
            <person name="Fsihi H."/>
            <person name="Garcia-del Portillo F."/>
            <person name="Garrido P."/>
            <person name="Gautier L."/>
            <person name="Goebel W."/>
            <person name="Gomez-Lopez N."/>
            <person name="Hain T."/>
            <person name="Hauf J."/>
            <person name="Jackson D."/>
            <person name="Jones L.-M."/>
            <person name="Kaerst U."/>
            <person name="Kreft J."/>
            <person name="Kuhn M."/>
            <person name="Kunst F."/>
            <person name="Kurapkat G."/>
            <person name="Madueno E."/>
            <person name="Maitournam A."/>
            <person name="Mata Vicente J."/>
            <person name="Ng E."/>
            <person name="Nedjari H."/>
            <person name="Nordsiek G."/>
            <person name="Novella S."/>
            <person name="de Pablos B."/>
            <person name="Perez-Diaz J.-C."/>
            <person name="Purcell R."/>
            <person name="Remmel B."/>
            <person name="Rose M."/>
            <person name="Schlueter T."/>
            <person name="Simoes N."/>
            <person name="Tierrez A."/>
            <person name="Vazquez-Boland J.-A."/>
            <person name="Voss H."/>
            <person name="Wehland J."/>
            <person name="Cossart P."/>
        </authorList>
    </citation>
    <scope>NUCLEOTIDE SEQUENCE [LARGE SCALE GENOMIC DNA]</scope>
    <source>
        <strain>ATCC BAA-680 / CLIP 11262</strain>
    </source>
</reference>
<name>REX_LISIN</name>
<keyword id="KW-0963">Cytoplasm</keyword>
<keyword id="KW-0238">DNA-binding</keyword>
<keyword id="KW-0520">NAD</keyword>
<keyword id="KW-0678">Repressor</keyword>
<keyword id="KW-0804">Transcription</keyword>
<keyword id="KW-0805">Transcription regulation</keyword>
<feature type="chain" id="PRO_0000097897" description="Redox-sensing transcriptional repressor Rex">
    <location>
        <begin position="1"/>
        <end position="215"/>
    </location>
</feature>
<feature type="DNA-binding region" description="H-T-H motif" evidence="1">
    <location>
        <begin position="18"/>
        <end position="57"/>
    </location>
</feature>
<feature type="binding site" evidence="1">
    <location>
        <begin position="92"/>
        <end position="97"/>
    </location>
    <ligand>
        <name>NAD(+)</name>
        <dbReference type="ChEBI" id="CHEBI:57540"/>
    </ligand>
</feature>
<accession>P60383</accession>
<accession>Q929U6</accession>
<sequence>MMEETTKIPQATAKRLPLYHRYLKYLDESGKERVSSAELSEAVKVDSATIRRDFSYFGALGKKGYGYNVSYILDFFSKTLSQDKQTNVALIGVGNLGTALLHYNFMKNNNIKIVAAFDVDPAKVGSVQQDIPIYHLNDMEEIVRENGVEVVILTVPADEAQVTVDRLIEADVKGILNFTPARISVPKQVRVHHIDLTTELQTLIYFLENYPAKTE</sequence>
<gene>
    <name evidence="1" type="primary">rex</name>
    <name type="ordered locus">lin2178</name>
</gene>